<accession>P23873</accession>
<reference key="1">
    <citation type="journal article" date="1991" name="J. Bacteriol.">
        <title>Structure and organization of hip, an operon that affects lethality due to inhibition of peptidoglycan or DNA synthesis.</title>
        <authorList>
            <person name="Black D.S."/>
            <person name="Kelly A.J."/>
            <person name="Mardis M.J."/>
            <person name="Moyed H.S."/>
        </authorList>
    </citation>
    <scope>NUCLEOTIDE SEQUENCE [GENOMIC DNA]</scope>
    <source>
        <strain>K12</strain>
    </source>
</reference>
<reference key="2">
    <citation type="journal article" date="1996" name="DNA Res.">
        <title>A 570-kb DNA sequence of the Escherichia coli K-12 genome corresponding to the 28.0-40.1 min region on the linkage map.</title>
        <authorList>
            <person name="Aiba H."/>
            <person name="Baba T."/>
            <person name="Fujita K."/>
            <person name="Hayashi K."/>
            <person name="Inada T."/>
            <person name="Isono K."/>
            <person name="Itoh T."/>
            <person name="Kasai H."/>
            <person name="Kashimoto K."/>
            <person name="Kimura S."/>
            <person name="Kitakawa M."/>
            <person name="Kitagawa M."/>
            <person name="Makino K."/>
            <person name="Miki T."/>
            <person name="Mizobuchi K."/>
            <person name="Mori H."/>
            <person name="Mori T."/>
            <person name="Motomura K."/>
            <person name="Nakade S."/>
            <person name="Nakamura Y."/>
            <person name="Nashimoto H."/>
            <person name="Nishio Y."/>
            <person name="Oshima T."/>
            <person name="Saito N."/>
            <person name="Sampei G."/>
            <person name="Seki Y."/>
            <person name="Sivasundaram S."/>
            <person name="Tagami H."/>
            <person name="Takeda J."/>
            <person name="Takemoto K."/>
            <person name="Takeuchi Y."/>
            <person name="Wada C."/>
            <person name="Yamamoto Y."/>
            <person name="Horiuchi T."/>
        </authorList>
    </citation>
    <scope>NUCLEOTIDE SEQUENCE [LARGE SCALE GENOMIC DNA]</scope>
    <source>
        <strain>K12 / W3110 / ATCC 27325 / DSM 5911</strain>
    </source>
</reference>
<reference key="3">
    <citation type="journal article" date="1997" name="Science">
        <title>The complete genome sequence of Escherichia coli K-12.</title>
        <authorList>
            <person name="Blattner F.R."/>
            <person name="Plunkett G. III"/>
            <person name="Bloch C.A."/>
            <person name="Perna N.T."/>
            <person name="Burland V."/>
            <person name="Riley M."/>
            <person name="Collado-Vides J."/>
            <person name="Glasner J.D."/>
            <person name="Rode C.K."/>
            <person name="Mayhew G.F."/>
            <person name="Gregor J."/>
            <person name="Davis N.W."/>
            <person name="Kirkpatrick H.A."/>
            <person name="Goeden M.A."/>
            <person name="Rose D.J."/>
            <person name="Mau B."/>
            <person name="Shao Y."/>
        </authorList>
    </citation>
    <scope>NUCLEOTIDE SEQUENCE [LARGE SCALE GENOMIC DNA]</scope>
    <source>
        <strain>K12 / MG1655 / ATCC 47076</strain>
    </source>
</reference>
<reference key="4">
    <citation type="journal article" date="2006" name="Mol. Syst. Biol.">
        <title>Highly accurate genome sequences of Escherichia coli K-12 strains MG1655 and W3110.</title>
        <authorList>
            <person name="Hayashi K."/>
            <person name="Morooka N."/>
            <person name="Yamamoto Y."/>
            <person name="Fujita K."/>
            <person name="Isono K."/>
            <person name="Choi S."/>
            <person name="Ohtsubo E."/>
            <person name="Baba T."/>
            <person name="Wanner B.L."/>
            <person name="Mori H."/>
            <person name="Horiuchi T."/>
        </authorList>
    </citation>
    <scope>NUCLEOTIDE SEQUENCE [LARGE SCALE GENOMIC DNA]</scope>
    <source>
        <strain>K12 / W3110 / ATCC 27325 / DSM 5911</strain>
    </source>
</reference>
<reference key="5">
    <citation type="journal article" date="1994" name="J. Bacteriol.">
        <title>Autoregulation of hip, an operon that affects lethality due to inhibition of peptidoglycan or DNA synthesis.</title>
        <authorList>
            <person name="Black D.S."/>
            <person name="Irwin B."/>
            <person name="Moyed H.S."/>
        </authorList>
    </citation>
    <scope>PROTEIN SEQUENCE OF 1-6</scope>
    <scope>CHARACTERIZATION</scope>
    <scope>DNA-BINDING</scope>
    <scope>FUNCTION AS A TRANSCRIPTIONAL REPRESSOR</scope>
    <scope>SUBUNIT</scope>
    <scope>DISRUPTION PHENOTYPE</scope>
    <source>
        <strain>K12</strain>
    </source>
</reference>
<reference key="6">
    <citation type="journal article" date="2010" name="Proc. Natl. Acad. Sci. U.S.A.">
        <title>Regulation of phenotypic variability by a threshold-based mechanism underlies bacterial persistence.</title>
        <authorList>
            <person name="Rotem E."/>
            <person name="Loinger A."/>
            <person name="Ronin I."/>
            <person name="Levin-Reisman I."/>
            <person name="Gabay C."/>
            <person name="Shoresh N."/>
            <person name="Biham O."/>
            <person name="Balaban N.Q."/>
        </authorList>
    </citation>
    <scope>FUNCTION</scope>
    <scope>SUBUNIT</scope>
    <scope>DISRUPTION PHENOTYPE</scope>
    <source>
        <strain>K12 / MG1655 / ATCC 47076</strain>
    </source>
</reference>
<reference key="7">
    <citation type="journal article" date="2012" name="PLoS ONE">
        <title>Regulation of the Escherichia coli HipBA toxin-antitoxin system by proteolysis.</title>
        <authorList>
            <person name="Hansen S."/>
            <person name="Vulic M."/>
            <person name="Min J."/>
            <person name="Yen T.J."/>
            <person name="Schumacher M.A."/>
            <person name="Brennan R.G."/>
            <person name="Lewis K."/>
        </authorList>
    </citation>
    <scope>ACTIVITY REGULATION</scope>
    <scope>CLEAVAGE BY LON</scope>
    <scope>MUTAGENESIS OF 73-ALA--TRP-88 AND TRP-88</scope>
</reference>
<reference key="8">
    <citation type="journal article" date="2013" name="J. Mol. Recognit.">
        <title>Interaction investigations of HipA binding to HipB dimer and HipB dimer + DNA complex: a molecular dynamics simulation study.</title>
        <authorList>
            <person name="Li C."/>
            <person name="Wang Y."/>
            <person name="Wang Y."/>
            <person name="Chen G."/>
        </authorList>
    </citation>
    <scope>SUBUNIT</scope>
    <scope>MODELING OF INTERACTION</scope>
</reference>
<reference key="9">
    <citation type="journal article" date="2013" name="Microbiology">
        <title>Escherichia coli toxin gene hipA affects biofilm formation and DNA release.</title>
        <authorList>
            <person name="Zhao J."/>
            <person name="Wang Q."/>
            <person name="Li M."/>
            <person name="Heijstra B.D."/>
            <person name="Wang S."/>
            <person name="Liang Q."/>
            <person name="Qi Q."/>
        </authorList>
    </citation>
    <scope>FUNCTION</scope>
    <scope>DISRUPTION PHENOTYPE</scope>
    <source>
        <strain>K12 / BW25113</strain>
    </source>
</reference>
<reference key="10">
    <citation type="journal article" date="2017" name="FEMS Microbiol. Lett.">
        <title>Characterization of YjjJ toxin of Escherichia coli.</title>
        <authorList>
            <person name="Maeda Y."/>
            <person name="Lin C.Y."/>
            <person name="Ishida Y."/>
            <person name="Inouye M."/>
            <person name="Yamaguchi Y."/>
            <person name="Phadtare S."/>
        </authorList>
    </citation>
    <scope>FUNCTION AS AN ANTITOXIN FOR YJJJ</scope>
    <source>
        <strain>B / BL21-DE3</strain>
    </source>
</reference>
<reference evidence="11" key="11">
    <citation type="journal article" date="2009" name="Acta Crystallogr. D">
        <title>New kinase regulation mechanism found in HipBA: a bacterial persistence switch.</title>
        <authorList>
            <person name="Evdokimov A."/>
            <person name="Voznesensky I."/>
            <person name="Fennell K."/>
            <person name="Anderson M."/>
            <person name="Smith J.F."/>
            <person name="Fisher D.A."/>
        </authorList>
    </citation>
    <scope>X-RAY CRYSTALLOGRAPHY (2.35 ANGSTROMS) IN COMPLEX WITH HIPA</scope>
    <scope>SUBUNIT</scope>
    <source>
        <strain>K12 / DH5-alpha</strain>
    </source>
</reference>
<reference evidence="12 13" key="12">
    <citation type="journal article" date="2009" name="Science">
        <title>Molecular mechanisms of HipA-mediated multidrug tolerance and its neutralization by HipB.</title>
        <authorList>
            <person name="Schumacher M.A."/>
            <person name="Piro K.M."/>
            <person name="Xu W."/>
            <person name="Hansen S."/>
            <person name="Lewis K."/>
            <person name="Brennan R.G."/>
        </authorList>
    </citation>
    <scope>X-RAY CRYSTALLOGRAPHY (2.68 ANGSTROMS) IN COMPLEX WITH HIPA AND DNA</scope>
    <scope>FUNCTION</scope>
    <scope>SUBUNIT</scope>
</reference>
<reference evidence="14 15 16 22" key="13">
    <citation type="journal article" date="2015" name="Nature">
        <title>HipBA-promoter structures reveal the basis of heritable multidrug tolerance.</title>
        <authorList>
            <person name="Schumacher M.A."/>
            <person name="Balani P."/>
            <person name="Min J."/>
            <person name="Chinnam N.B."/>
            <person name="Hansen S."/>
            <person name="Vulic M."/>
            <person name="Lewis K."/>
            <person name="Brennan R.G."/>
        </authorList>
    </citation>
    <scope>X-RAY CRYSTALLOGRAPHY (3.25 ANGSTROMS) OF 1-72 IN COMPLEX WITH DNA AND IN COMPLEX WITH HIPA AND DNA</scope>
    <scope>FUNCTION</scope>
    <scope>SUBUNIT</scope>
</reference>
<reference evidence="17 18 19 20 21" key="14">
    <citation type="submission" date="2015-04" db="PDB data bank">
        <title>Molecular mechanism on hipBA gene regulation.</title>
        <authorList>
            <person name="Min J."/>
            <person name="Wang A."/>
            <person name="Brennan R.G."/>
            <person name="Schumacher M.A."/>
        </authorList>
    </citation>
    <scope>X-RAY CRYSTALLOGRAPHY (2.10 ANGSTROMS) OF 3-74</scope>
</reference>
<protein>
    <recommendedName>
        <fullName>Antitoxin HipB</fullName>
    </recommendedName>
</protein>
<gene>
    <name type="primary">hipB</name>
    <name type="ordered locus">b1508</name>
    <name type="ordered locus">JW1501</name>
</gene>
<evidence type="ECO:0000255" key="1">
    <source>
        <dbReference type="PROSITE-ProRule" id="PRU00257"/>
    </source>
</evidence>
<evidence type="ECO:0000269" key="2">
    <source>
    </source>
</evidence>
<evidence type="ECO:0000269" key="3">
    <source>
    </source>
</evidence>
<evidence type="ECO:0000269" key="4">
    <source>
    </source>
</evidence>
<evidence type="ECO:0000269" key="5">
    <source>
    </source>
</evidence>
<evidence type="ECO:0000269" key="6">
    <source>
    </source>
</evidence>
<evidence type="ECO:0000269" key="7">
    <source>
    </source>
</evidence>
<evidence type="ECO:0000269" key="8">
    <source>
    </source>
</evidence>
<evidence type="ECO:0000269" key="9">
    <source>
    </source>
</evidence>
<evidence type="ECO:0000269" key="10">
    <source>
    </source>
</evidence>
<evidence type="ECO:0007744" key="11">
    <source>
        <dbReference type="PDB" id="2WIU"/>
    </source>
</evidence>
<evidence type="ECO:0007744" key="12">
    <source>
        <dbReference type="PDB" id="3DNV"/>
    </source>
</evidence>
<evidence type="ECO:0007744" key="13">
    <source>
        <dbReference type="PDB" id="3HZI"/>
    </source>
</evidence>
<evidence type="ECO:0007744" key="14">
    <source>
        <dbReference type="PDB" id="4YG1"/>
    </source>
</evidence>
<evidence type="ECO:0007744" key="15">
    <source>
        <dbReference type="PDB" id="4YG4"/>
    </source>
</evidence>
<evidence type="ECO:0007744" key="16">
    <source>
        <dbReference type="PDB" id="4YG7"/>
    </source>
</evidence>
<evidence type="ECO:0007744" key="17">
    <source>
        <dbReference type="PDB" id="4Z58"/>
    </source>
</evidence>
<evidence type="ECO:0007744" key="18">
    <source>
        <dbReference type="PDB" id="4Z59"/>
    </source>
</evidence>
<evidence type="ECO:0007744" key="19">
    <source>
        <dbReference type="PDB" id="4Z5C"/>
    </source>
</evidence>
<evidence type="ECO:0007744" key="20">
    <source>
        <dbReference type="PDB" id="4Z5D"/>
    </source>
</evidence>
<evidence type="ECO:0007744" key="21">
    <source>
        <dbReference type="PDB" id="4Z5H"/>
    </source>
</evidence>
<evidence type="ECO:0007744" key="22">
    <source>
        <dbReference type="PDB" id="5K98"/>
    </source>
</evidence>
<evidence type="ECO:0007829" key="23">
    <source>
        <dbReference type="PDB" id="4Z5D"/>
    </source>
</evidence>
<evidence type="ECO:0007829" key="24">
    <source>
        <dbReference type="PDB" id="4Z5H"/>
    </source>
</evidence>
<proteinExistence type="evidence at protein level"/>
<comment type="function">
    <text evidence="2 4 6 8 9 10">Antitoxin component of a type II toxin-antitoxin (TA) system. Neutralizes the toxic effect of cognate toxin HipA (PubMed:20616060). Also neutralizes the toxic effect of non-cognate toxin YjjJ (PubMed:28430938). Binds to operator sites with the consensus sequence 5-'TATCCN(8)GGATA-3' to repress the hipBA operon promoter (PubMed:8021189, PubMed:19150849); binding of HipB(2) to DNA induces a 70 degree bend (PubMed:19150849). This forces HipA dimerization, which blocks HipA's active site and thus its toxic action (PubMed:26222023). May play a role in biofilm formation (PubMed:23329678).</text>
</comment>
<comment type="activity regulation">
    <text evidence="5">Degraded by Lon protease; degradation is inhibited in a HipA-HipB complex and when bound to the operator consensus sequence dsDNA.</text>
</comment>
<comment type="subunit">
    <text evidence="2 3 4 7 8 10">Homodimer (PubMed:8021189). Binds operator DNA sites in the absence of HipA, inducing a 70 degree bend in consecutive operators and deforming DNA between the operators so that HipB dimers bind on opposite faces of the DNA (PubMed:26222023). Forms a HipA(2)HipB(2) heterotetramer which can interact with a single operator site on DNA, inducing a 70 degree bend (PubMed:19150849). When 2 operators are present each HipB dimer contacts 1 HipA molecule, which are brought together by the DNA bend and dimerize, blocking the HipA active site and inactivating its toxic activity (PubMed:26222023). HipA-HipB-induced bending also distorts the -35 and -10 boxes of the promoter and probably prevents sigma-factor binding, and additionally bound HipB and HipA block RNA polymerase access to the -35 box, thus repressing the operon (PubMed:26222023). This complex also blocks the toxic activity of HipA (PubMed:19150849). Mutations present in allele hipA7 (G22S and D291A) decrease the affinity of HipA for HipB (PubMed:20616060).</text>
</comment>
<comment type="interaction">
    <interactant intactId="EBI-1129654">
        <id>P23873</id>
    </interactant>
    <interactant intactId="EBI-560590">
        <id>P23874</id>
        <label>hipA</label>
    </interactant>
    <organismsDiffer>false</organismsDiffer>
    <experiments>2</experiments>
</comment>
<comment type="PTM">
    <text evidence="5">Degraded by Lon protease in vivo; half-life is 17 minutes in wild-type cells and over 200 minutes in a lon deletion strain. In vitro degradation by Lon is Mg(2+)-ATP-dependent (PubMed:22720069).</text>
</comment>
<comment type="disruption phenotype">
    <text evidence="4 6 10">Cannot be disrupted, suggesting it is a functional antitoxin; no visible phenotype when the hipBA operon is deleted (PubMed:20616060, PubMed:8021189). A hipA or a hipB-hipA operon deletion show decreased biofilm production in the absence of antibiotics (PubMed:23329678).</text>
</comment>
<name>HIPB_ECOLI</name>
<organism>
    <name type="scientific">Escherichia coli (strain K12)</name>
    <dbReference type="NCBI Taxonomy" id="83333"/>
    <lineage>
        <taxon>Bacteria</taxon>
        <taxon>Pseudomonadati</taxon>
        <taxon>Pseudomonadota</taxon>
        <taxon>Gammaproteobacteria</taxon>
        <taxon>Enterobacterales</taxon>
        <taxon>Enterobacteriaceae</taxon>
        <taxon>Escherichia</taxon>
    </lineage>
</organism>
<feature type="chain" id="PRO_0000149726" description="Antitoxin HipB">
    <location>
        <begin position="1"/>
        <end position="88"/>
    </location>
</feature>
<feature type="domain" description="HTH cro/C1-type" evidence="1 2">
    <location>
        <begin position="17"/>
        <end position="71"/>
    </location>
</feature>
<feature type="DNA-binding region" description="H-T-H motif" evidence="1 2">
    <location>
        <begin position="21"/>
        <end position="47"/>
    </location>
</feature>
<feature type="mutagenesis site" description="Increased half-life in vivo and in vitro, no change in DNA or HipA-binding." evidence="5">
    <location>
        <begin position="73"/>
        <end position="88"/>
    </location>
</feature>
<feature type="mutagenesis site" description="No change in DNA or HipA-binding." evidence="5">
    <original>W</original>
    <variation>A</variation>
    <location>
        <position position="88"/>
    </location>
</feature>
<feature type="helix" evidence="24">
    <location>
        <begin position="10"/>
        <end position="23"/>
    </location>
</feature>
<feature type="helix" evidence="24">
    <location>
        <begin position="28"/>
        <end position="35"/>
    </location>
</feature>
<feature type="helix" evidence="24">
    <location>
        <begin position="39"/>
        <end position="47"/>
    </location>
</feature>
<feature type="helix" evidence="24">
    <location>
        <begin position="49"/>
        <end position="51"/>
    </location>
</feature>
<feature type="helix" evidence="24">
    <location>
        <begin position="54"/>
        <end position="63"/>
    </location>
</feature>
<feature type="strand" evidence="23">
    <location>
        <begin position="66"/>
        <end position="72"/>
    </location>
</feature>
<sequence length="88" mass="10016">MMSFQKIYSPTQLANAMKLVRQQNGWTQSELAKKIGIKQATISNFENNPDNTTLTTFFKILQSLELSMTLCDAKNASPESTEQQNLEW</sequence>
<dbReference type="EMBL" id="M61242">
    <property type="protein sequence ID" value="AAA56877.1"/>
    <property type="molecule type" value="Genomic_DNA"/>
</dbReference>
<dbReference type="EMBL" id="U00096">
    <property type="protein sequence ID" value="AAC74581.1"/>
    <property type="molecule type" value="Genomic_DNA"/>
</dbReference>
<dbReference type="EMBL" id="AP009048">
    <property type="protein sequence ID" value="BAA15180.1"/>
    <property type="molecule type" value="Genomic_DNA"/>
</dbReference>
<dbReference type="PIR" id="A38112">
    <property type="entry name" value="A38112"/>
</dbReference>
<dbReference type="RefSeq" id="NP_416025.1">
    <property type="nucleotide sequence ID" value="NC_000913.3"/>
</dbReference>
<dbReference type="RefSeq" id="WP_001301023.1">
    <property type="nucleotide sequence ID" value="NZ_SSZK01000001.1"/>
</dbReference>
<dbReference type="PDB" id="2WIU">
    <property type="method" value="X-ray"/>
    <property type="resolution" value="2.35 A"/>
    <property type="chains" value="B/D=1-88"/>
</dbReference>
<dbReference type="PDB" id="3DNV">
    <property type="method" value="X-ray"/>
    <property type="resolution" value="2.68 A"/>
    <property type="chains" value="B=1-88"/>
</dbReference>
<dbReference type="PDB" id="3HZI">
    <property type="method" value="X-ray"/>
    <property type="resolution" value="2.98 A"/>
    <property type="chains" value="B=1-88"/>
</dbReference>
<dbReference type="PDB" id="4YG1">
    <property type="method" value="X-ray"/>
    <property type="resolution" value="3.25 A"/>
    <property type="chains" value="A/B/C/D=1-72"/>
</dbReference>
<dbReference type="PDB" id="4YG4">
    <property type="method" value="X-ray"/>
    <property type="resolution" value="3.50 A"/>
    <property type="chains" value="A/B/C/D=4-74"/>
</dbReference>
<dbReference type="PDB" id="4YG7">
    <property type="method" value="X-ray"/>
    <property type="resolution" value="3.77 A"/>
    <property type="chains" value="B/C/E/G=4-74"/>
</dbReference>
<dbReference type="PDB" id="4Z58">
    <property type="method" value="X-ray"/>
    <property type="resolution" value="2.50 A"/>
    <property type="chains" value="A=4-74"/>
</dbReference>
<dbReference type="PDB" id="4Z59">
    <property type="method" value="X-ray"/>
    <property type="resolution" value="2.30 A"/>
    <property type="chains" value="A=4-74"/>
</dbReference>
<dbReference type="PDB" id="4Z5C">
    <property type="method" value="X-ray"/>
    <property type="resolution" value="2.50 A"/>
    <property type="chains" value="A/B=4-74"/>
</dbReference>
<dbReference type="PDB" id="4Z5D">
    <property type="method" value="X-ray"/>
    <property type="resolution" value="2.15 A"/>
    <property type="chains" value="A/B=4-74"/>
</dbReference>
<dbReference type="PDB" id="4Z5H">
    <property type="method" value="X-ray"/>
    <property type="resolution" value="2.10 A"/>
    <property type="chains" value="A=3-74"/>
</dbReference>
<dbReference type="PDB" id="5K98">
    <property type="method" value="X-ray"/>
    <property type="resolution" value="3.99 A"/>
    <property type="chains" value="B/P=1-88"/>
</dbReference>
<dbReference type="PDBsum" id="2WIU"/>
<dbReference type="PDBsum" id="3DNV"/>
<dbReference type="PDBsum" id="3HZI"/>
<dbReference type="PDBsum" id="4YG1"/>
<dbReference type="PDBsum" id="4YG4"/>
<dbReference type="PDBsum" id="4YG7"/>
<dbReference type="PDBsum" id="4Z58"/>
<dbReference type="PDBsum" id="4Z59"/>
<dbReference type="PDBsum" id="4Z5C"/>
<dbReference type="PDBsum" id="4Z5D"/>
<dbReference type="PDBsum" id="4Z5H"/>
<dbReference type="PDBsum" id="5K98"/>
<dbReference type="SMR" id="P23873"/>
<dbReference type="BioGRID" id="4260221">
    <property type="interactions" value="73"/>
</dbReference>
<dbReference type="ComplexPortal" id="CPX-180">
    <property type="entry name" value="HipBA toxin-antitoxin complex"/>
</dbReference>
<dbReference type="DIP" id="DIP-9899N"/>
<dbReference type="FunCoup" id="P23873">
    <property type="interactions" value="27"/>
</dbReference>
<dbReference type="IntAct" id="P23873">
    <property type="interactions" value="2"/>
</dbReference>
<dbReference type="STRING" id="511145.b1508"/>
<dbReference type="jPOST" id="P23873"/>
<dbReference type="PaxDb" id="511145-b1508"/>
<dbReference type="EnsemblBacteria" id="AAC74581">
    <property type="protein sequence ID" value="AAC74581"/>
    <property type="gene ID" value="b1508"/>
</dbReference>
<dbReference type="GeneID" id="946065"/>
<dbReference type="KEGG" id="ecj:JW1501"/>
<dbReference type="KEGG" id="eco:b1508"/>
<dbReference type="KEGG" id="ecoc:C3026_08725"/>
<dbReference type="PATRIC" id="fig|1411691.4.peg.759"/>
<dbReference type="EchoBASE" id="EB0437"/>
<dbReference type="eggNOG" id="COG1396">
    <property type="taxonomic scope" value="Bacteria"/>
</dbReference>
<dbReference type="HOGENOM" id="CLU_066192_47_2_6"/>
<dbReference type="InParanoid" id="P23873"/>
<dbReference type="OMA" id="HALEVHC"/>
<dbReference type="OrthoDB" id="5891007at2"/>
<dbReference type="PhylomeDB" id="P23873"/>
<dbReference type="BioCyc" id="EcoCyc:EG10442-MONOMER"/>
<dbReference type="BioCyc" id="MetaCyc:EG10442-MONOMER"/>
<dbReference type="EvolutionaryTrace" id="P23873"/>
<dbReference type="PRO" id="PR:P23873"/>
<dbReference type="Proteomes" id="UP000000625">
    <property type="component" value="Chromosome"/>
</dbReference>
<dbReference type="CollecTF" id="EXPREG_00000960"/>
<dbReference type="GO" id="GO:0032993">
    <property type="term" value="C:protein-DNA complex"/>
    <property type="evidence" value="ECO:0000353"/>
    <property type="project" value="CollecTF"/>
</dbReference>
<dbReference type="GO" id="GO:0110001">
    <property type="term" value="C:toxin-antitoxin complex"/>
    <property type="evidence" value="ECO:0000353"/>
    <property type="project" value="ComplexPortal"/>
</dbReference>
<dbReference type="GO" id="GO:0001046">
    <property type="term" value="F:core promoter sequence-specific DNA binding"/>
    <property type="evidence" value="ECO:0000314"/>
    <property type="project" value="EcoCyc"/>
</dbReference>
<dbReference type="GO" id="GO:0001217">
    <property type="term" value="F:DNA-binding transcription repressor activity"/>
    <property type="evidence" value="ECO:0000353"/>
    <property type="project" value="CollecTF"/>
</dbReference>
<dbReference type="GO" id="GO:0042803">
    <property type="term" value="F:protein homodimerization activity"/>
    <property type="evidence" value="ECO:0000314"/>
    <property type="project" value="EcoCyc"/>
</dbReference>
<dbReference type="GO" id="GO:0043565">
    <property type="term" value="F:sequence-specific DNA binding"/>
    <property type="evidence" value="ECO:0000314"/>
    <property type="project" value="EcoCyc"/>
</dbReference>
<dbReference type="GO" id="GO:0000976">
    <property type="term" value="F:transcription cis-regulatory region binding"/>
    <property type="evidence" value="ECO:0000353"/>
    <property type="project" value="CollecTF"/>
</dbReference>
<dbReference type="GO" id="GO:0006351">
    <property type="term" value="P:DNA-templated transcription"/>
    <property type="evidence" value="ECO:0000314"/>
    <property type="project" value="EcoCyc"/>
</dbReference>
<dbReference type="GO" id="GO:0045892">
    <property type="term" value="P:negative regulation of DNA-templated transcription"/>
    <property type="evidence" value="ECO:0000314"/>
    <property type="project" value="EcoCyc"/>
</dbReference>
<dbReference type="GO" id="GO:0006355">
    <property type="term" value="P:regulation of DNA-templated transcription"/>
    <property type="evidence" value="ECO:0000314"/>
    <property type="project" value="ComplexPortal"/>
</dbReference>
<dbReference type="GO" id="GO:0040008">
    <property type="term" value="P:regulation of growth"/>
    <property type="evidence" value="ECO:0000314"/>
    <property type="project" value="ComplexPortal"/>
</dbReference>
<dbReference type="CDD" id="cd00093">
    <property type="entry name" value="HTH_XRE"/>
    <property type="match status" value="1"/>
</dbReference>
<dbReference type="DisProt" id="DP02899"/>
<dbReference type="FunFam" id="1.10.260.40:FF:000038">
    <property type="entry name" value="HTH-type transcriptional regulator hipB"/>
    <property type="match status" value="1"/>
</dbReference>
<dbReference type="Gene3D" id="1.10.260.40">
    <property type="entry name" value="lambda repressor-like DNA-binding domains"/>
    <property type="match status" value="1"/>
</dbReference>
<dbReference type="InterPro" id="IPR001387">
    <property type="entry name" value="Cro/C1-type_HTH"/>
</dbReference>
<dbReference type="InterPro" id="IPR010982">
    <property type="entry name" value="Lambda_DNA-bd_dom_sf"/>
</dbReference>
<dbReference type="NCBIfam" id="NF007271">
    <property type="entry name" value="PRK09726.1"/>
    <property type="match status" value="1"/>
</dbReference>
<dbReference type="Pfam" id="PF01381">
    <property type="entry name" value="HTH_3"/>
    <property type="match status" value="1"/>
</dbReference>
<dbReference type="SMART" id="SM00530">
    <property type="entry name" value="HTH_XRE"/>
    <property type="match status" value="1"/>
</dbReference>
<dbReference type="SUPFAM" id="SSF47413">
    <property type="entry name" value="lambda repressor-like DNA-binding domains"/>
    <property type="match status" value="1"/>
</dbReference>
<dbReference type="PROSITE" id="PS50943">
    <property type="entry name" value="HTH_CROC1"/>
    <property type="match status" value="1"/>
</dbReference>
<keyword id="KW-0002">3D-structure</keyword>
<keyword id="KW-0903">Direct protein sequencing</keyword>
<keyword id="KW-0238">DNA-binding</keyword>
<keyword id="KW-1185">Reference proteome</keyword>
<keyword id="KW-0678">Repressor</keyword>
<keyword id="KW-1277">Toxin-antitoxin system</keyword>
<keyword id="KW-0804">Transcription</keyword>
<keyword id="KW-0805">Transcription regulation</keyword>